<reference key="1">
    <citation type="journal article" date="1997" name="Biochem. Biophys. Res. Commun.">
        <title>Cloning and expression of a brain-derived TSH receptor.</title>
        <authorList>
            <person name="Bockmann J."/>
            <person name="Winter C."/>
            <person name="Wittkowski W."/>
            <person name="Kreutz M.R."/>
            <person name="Boeckers T.M."/>
        </authorList>
    </citation>
    <scope>NUCLEOTIDE SEQUENCE [MRNA]</scope>
    <source>
        <tissue>Pituitary</tissue>
    </source>
</reference>
<keyword id="KW-1003">Cell membrane</keyword>
<keyword id="KW-1015">Disulfide bond</keyword>
<keyword id="KW-0297">G-protein coupled receptor</keyword>
<keyword id="KW-0325">Glycoprotein</keyword>
<keyword id="KW-0433">Leucine-rich repeat</keyword>
<keyword id="KW-0472">Membrane</keyword>
<keyword id="KW-0675">Receptor</keyword>
<keyword id="KW-1185">Reference proteome</keyword>
<keyword id="KW-0677">Repeat</keyword>
<keyword id="KW-0732">Signal</keyword>
<keyword id="KW-0765">Sulfation</keyword>
<keyword id="KW-0807">Transducer</keyword>
<keyword id="KW-0812">Transmembrane</keyword>
<keyword id="KW-1133">Transmembrane helix</keyword>
<protein>
    <recommendedName>
        <fullName>Thyrotropin receptor</fullName>
    </recommendedName>
    <alternativeName>
        <fullName>Thyroid-stimulating hormone receptor</fullName>
        <shortName>TSH-R</shortName>
    </alternativeName>
</protein>
<comment type="function">
    <text evidence="1 2">Receptor for the thyroid-stimulating hormone (TSH) or thyrotropin. Also acts as a receptor for the heterodimeric glycoprotein hormone (GPHA2:GPHB5) or thyrostimulin. The activity of this receptor is mediated by G proteins which activate adenylate cyclase. Plays a central role in controlling thyroid cell metabolism.</text>
</comment>
<comment type="subunit">
    <text evidence="1">Interacts with heterodimer GPHA2:GPHB5; this interaction stimulates cAMP production. Interacts (via the PDZ-binding motif) with SCRIB; regulates TSHR trafficking and function.</text>
</comment>
<comment type="subcellular location">
    <subcellularLocation>
        <location evidence="1">Cell membrane</location>
        <topology evidence="1">Multi-pass membrane protein</topology>
    </subcellularLocation>
    <subcellularLocation>
        <location evidence="1">Basolateral cell membrane</location>
        <topology evidence="1">Multi-pass membrane protein</topology>
    </subcellularLocation>
</comment>
<comment type="PTM">
    <text evidence="1">Glycosylated.</text>
</comment>
<comment type="PTM">
    <text evidence="1">Sulfated. Sulfation on Tyr-385 plays a role in thyrotropin receptor binding and activation.</text>
</comment>
<comment type="similarity">
    <text evidence="4">Belongs to the G-protein coupled receptor 1 family. FSH/LSH/TSH subfamily.</text>
</comment>
<sequence length="764" mass="86674">MRPTPLLRLALLLVLPSSLWGERCPSPPCECRQEDDFRVTCKDIQRIPSLPPSTQTLKFIETHLKTIPSRAFSNLPNISRIYLSIDATLQQLESHSFYNLSKVTHIEIRNTRSLTYIDSGALKELPLLKFLGIFNTGLRVFPDLTKIYSTDVFFILEITDNPYMTSVPANAFQGLSNETLTLKLYNNGFTSIQGHAFNGTKLDAVYLNKNKYLTVIDQDAFAGVYSGPTLLDISYTSVTALPSKGLEHLKELIARNTWTLKKLPLSLSFLHLTRADLSYPSHCCAFKNQKNIRGILQSLMCNESSIWGLRQRKSASALNGPFYQEYEEDLGDGSAGYKENSKFQDTHSNSHYYVFFEDQEDEIIGFGQELKNPQEETLQAFDNHYDYTVCGGSEEMVCTPKSDEFNPCEDIMGYKFLRIVVWFVSLLALLGNVFVLVILLTSHYKLTVPRFLMCNLAFADFCMGLYLLLIASVDLYTQSEYYNHAIDWQTGPGCNTAGFFTVFASELSVYTLTVITLERWYAITFAMHLDRKIRLWHAYVIMLGGWVCCFLLALLPLVGISSYAKVSICLPMDTETPLALAYIILVLLLNIIAFIIVCACYVKIYITVRNPHYNPGDKDTRIAKRMAVLIFTDFMCMAPISFYALSALMNKPLITVTNSKILLVLFYPLNSCANPFLYAIFTKAFQRDVFMLLSKFGICKRQAQAYRGQRVSSKNSTGIRVQKVPPDVRQSLPNVQDDYELLGNSHLTPKQQDQTSKEYKQTVL</sequence>
<organism>
    <name type="scientific">Ovis aries</name>
    <name type="common">Sheep</name>
    <dbReference type="NCBI Taxonomy" id="9940"/>
    <lineage>
        <taxon>Eukaryota</taxon>
        <taxon>Metazoa</taxon>
        <taxon>Chordata</taxon>
        <taxon>Craniata</taxon>
        <taxon>Vertebrata</taxon>
        <taxon>Euteleostomi</taxon>
        <taxon>Mammalia</taxon>
        <taxon>Eutheria</taxon>
        <taxon>Laurasiatheria</taxon>
        <taxon>Artiodactyla</taxon>
        <taxon>Ruminantia</taxon>
        <taxon>Pecora</taxon>
        <taxon>Bovidae</taxon>
        <taxon>Caprinae</taxon>
        <taxon>Ovis</taxon>
    </lineage>
</organism>
<name>TSHR_SHEEP</name>
<accession>P56495</accession>
<evidence type="ECO:0000250" key="1">
    <source>
        <dbReference type="UniProtKB" id="P16473"/>
    </source>
</evidence>
<evidence type="ECO:0000250" key="2">
    <source>
        <dbReference type="UniProtKB" id="P21463"/>
    </source>
</evidence>
<evidence type="ECO:0000255" key="3"/>
<evidence type="ECO:0000255" key="4">
    <source>
        <dbReference type="PROSITE-ProRule" id="PRU00521"/>
    </source>
</evidence>
<proteinExistence type="evidence at transcript level"/>
<dbReference type="EMBL" id="Y13434">
    <property type="protein sequence ID" value="CAA73846.1"/>
    <property type="molecule type" value="mRNA"/>
</dbReference>
<dbReference type="PIR" id="JC5643">
    <property type="entry name" value="JC5643"/>
</dbReference>
<dbReference type="RefSeq" id="NP_001009410.1">
    <property type="nucleotide sequence ID" value="NM_001009410.1"/>
</dbReference>
<dbReference type="SMR" id="P56495"/>
<dbReference type="STRING" id="9940.ENSOARP00000003068"/>
<dbReference type="GlyCosmos" id="P56495">
    <property type="glycosylation" value="5 sites, No reported glycans"/>
</dbReference>
<dbReference type="PaxDb" id="9940-ENSOARP00000003068"/>
<dbReference type="Ensembl" id="ENSOART00040030274">
    <property type="protein sequence ID" value="ENSOARP00040015443"/>
    <property type="gene ID" value="ENSOARG00040018316"/>
</dbReference>
<dbReference type="Ensembl" id="ENSOART00215016900">
    <property type="protein sequence ID" value="ENSOARP00215008549"/>
    <property type="gene ID" value="ENSOARG00215010160"/>
</dbReference>
<dbReference type="Ensembl" id="ENSOART00260019299">
    <property type="protein sequence ID" value="ENSOARP00260009637"/>
    <property type="gene ID" value="ENSOARG00260011917"/>
</dbReference>
<dbReference type="GeneID" id="443428"/>
<dbReference type="KEGG" id="oas:443428"/>
<dbReference type="CTD" id="7253"/>
<dbReference type="eggNOG" id="KOG2087">
    <property type="taxonomic scope" value="Eukaryota"/>
</dbReference>
<dbReference type="HOGENOM" id="CLU_006130_1_1_1"/>
<dbReference type="OMA" id="TRDMRQS"/>
<dbReference type="OrthoDB" id="5981530at2759"/>
<dbReference type="Proteomes" id="UP000002356">
    <property type="component" value="Chromosome 7"/>
</dbReference>
<dbReference type="Bgee" id="ENSOARG00000002882">
    <property type="expression patterns" value="Expressed in thyroid gland and 2 other cell types or tissues"/>
</dbReference>
<dbReference type="GO" id="GO:0016323">
    <property type="term" value="C:basolateral plasma membrane"/>
    <property type="evidence" value="ECO:0000250"/>
    <property type="project" value="UniProtKB"/>
</dbReference>
<dbReference type="GO" id="GO:0005886">
    <property type="term" value="C:plasma membrane"/>
    <property type="evidence" value="ECO:0000250"/>
    <property type="project" value="UniProtKB"/>
</dbReference>
<dbReference type="GO" id="GO:0008528">
    <property type="term" value="F:G protein-coupled peptide receptor activity"/>
    <property type="evidence" value="ECO:0007669"/>
    <property type="project" value="TreeGrafter"/>
</dbReference>
<dbReference type="GO" id="GO:0044877">
    <property type="term" value="F:protein-containing complex binding"/>
    <property type="evidence" value="ECO:0000250"/>
    <property type="project" value="UniProtKB"/>
</dbReference>
<dbReference type="GO" id="GO:0038023">
    <property type="term" value="F:signaling receptor activity"/>
    <property type="evidence" value="ECO:0000250"/>
    <property type="project" value="UniProtKB"/>
</dbReference>
<dbReference type="GO" id="GO:0004996">
    <property type="term" value="F:thyroid-stimulating hormone receptor activity"/>
    <property type="evidence" value="ECO:0000250"/>
    <property type="project" value="UniProtKB"/>
</dbReference>
<dbReference type="GO" id="GO:0007189">
    <property type="term" value="P:adenylate cyclase-activating G protein-coupled receptor signaling pathway"/>
    <property type="evidence" value="ECO:0000250"/>
    <property type="project" value="UniProtKB"/>
</dbReference>
<dbReference type="GO" id="GO:0008344">
    <property type="term" value="P:adult locomotory behavior"/>
    <property type="evidence" value="ECO:0007669"/>
    <property type="project" value="Ensembl"/>
</dbReference>
<dbReference type="GO" id="GO:0030183">
    <property type="term" value="P:B cell differentiation"/>
    <property type="evidence" value="ECO:0007669"/>
    <property type="project" value="Ensembl"/>
</dbReference>
<dbReference type="GO" id="GO:0007166">
    <property type="term" value="P:cell surface receptor signaling pathway"/>
    <property type="evidence" value="ECO:0000250"/>
    <property type="project" value="UniProtKB"/>
</dbReference>
<dbReference type="GO" id="GO:1904588">
    <property type="term" value="P:cellular response to glycoprotein"/>
    <property type="evidence" value="ECO:0000250"/>
    <property type="project" value="UniProtKB"/>
</dbReference>
<dbReference type="GO" id="GO:1905229">
    <property type="term" value="P:cellular response to thyrotropin-releasing hormone"/>
    <property type="evidence" value="ECO:0000250"/>
    <property type="project" value="UniProtKB"/>
</dbReference>
<dbReference type="GO" id="GO:0090103">
    <property type="term" value="P:cochlea morphogenesis"/>
    <property type="evidence" value="ECO:0007669"/>
    <property type="project" value="Ensembl"/>
</dbReference>
<dbReference type="GO" id="GO:0071542">
    <property type="term" value="P:dopaminergic neuron differentiation"/>
    <property type="evidence" value="ECO:0007669"/>
    <property type="project" value="Ensembl"/>
</dbReference>
<dbReference type="GO" id="GO:0009755">
    <property type="term" value="P:hormone-mediated signaling pathway"/>
    <property type="evidence" value="ECO:0007669"/>
    <property type="project" value="TreeGrafter"/>
</dbReference>
<dbReference type="GO" id="GO:0060122">
    <property type="term" value="P:inner ear receptor cell stereocilium organization"/>
    <property type="evidence" value="ECO:0007669"/>
    <property type="project" value="Ensembl"/>
</dbReference>
<dbReference type="GO" id="GO:0120162">
    <property type="term" value="P:positive regulation of cold-induced thermogenesis"/>
    <property type="evidence" value="ECO:0007669"/>
    <property type="project" value="Ensembl"/>
</dbReference>
<dbReference type="GO" id="GO:0040018">
    <property type="term" value="P:positive regulation of multicellular organism growth"/>
    <property type="evidence" value="ECO:0007669"/>
    <property type="project" value="Ensembl"/>
</dbReference>
<dbReference type="GO" id="GO:0040012">
    <property type="term" value="P:regulation of locomotion"/>
    <property type="evidence" value="ECO:0007669"/>
    <property type="project" value="Ensembl"/>
</dbReference>
<dbReference type="GO" id="GO:0038194">
    <property type="term" value="P:thyroid-stimulating hormone signaling pathway"/>
    <property type="evidence" value="ECO:0000250"/>
    <property type="project" value="UniProtKB"/>
</dbReference>
<dbReference type="CDD" id="cd15964">
    <property type="entry name" value="7tmA_TSH-R"/>
    <property type="match status" value="1"/>
</dbReference>
<dbReference type="FunFam" id="1.20.1070.10:FF:000019">
    <property type="entry name" value="Lutropin-choriogonadotropic hormone receptor"/>
    <property type="match status" value="1"/>
</dbReference>
<dbReference type="FunFam" id="3.80.10.10:FF:000176">
    <property type="entry name" value="Thyrotropin receptor"/>
    <property type="match status" value="1"/>
</dbReference>
<dbReference type="Gene3D" id="1.20.1070.10">
    <property type="entry name" value="Rhodopsin 7-helix transmembrane proteins"/>
    <property type="match status" value="1"/>
</dbReference>
<dbReference type="Gene3D" id="3.80.10.10">
    <property type="entry name" value="Ribonuclease Inhibitor"/>
    <property type="match status" value="1"/>
</dbReference>
<dbReference type="InterPro" id="IPR000276">
    <property type="entry name" value="GPCR_Rhodpsn"/>
</dbReference>
<dbReference type="InterPro" id="IPR017452">
    <property type="entry name" value="GPCR_Rhodpsn_7TM"/>
</dbReference>
<dbReference type="InterPro" id="IPR002131">
    <property type="entry name" value="Gphrmn_rcpt_fam"/>
</dbReference>
<dbReference type="InterPro" id="IPR026906">
    <property type="entry name" value="LRR_5"/>
</dbReference>
<dbReference type="InterPro" id="IPR032675">
    <property type="entry name" value="LRR_dom_sf"/>
</dbReference>
<dbReference type="InterPro" id="IPR002274">
    <property type="entry name" value="TSH_rcpt"/>
</dbReference>
<dbReference type="PANTHER" id="PTHR24372">
    <property type="entry name" value="GLYCOPROTEIN HORMONE RECEPTOR"/>
    <property type="match status" value="1"/>
</dbReference>
<dbReference type="PANTHER" id="PTHR24372:SF0">
    <property type="entry name" value="THYROTROPIN RECEPTOR"/>
    <property type="match status" value="1"/>
</dbReference>
<dbReference type="Pfam" id="PF00001">
    <property type="entry name" value="7tm_1"/>
    <property type="match status" value="1"/>
</dbReference>
<dbReference type="Pfam" id="PF13306">
    <property type="entry name" value="LRR_5"/>
    <property type="match status" value="2"/>
</dbReference>
<dbReference type="PRINTS" id="PR00373">
    <property type="entry name" value="GLYCHORMONER"/>
</dbReference>
<dbReference type="PRINTS" id="PR00237">
    <property type="entry name" value="GPCRRHODOPSN"/>
</dbReference>
<dbReference type="PRINTS" id="PR01145">
    <property type="entry name" value="TSHRECEPTOR"/>
</dbReference>
<dbReference type="SUPFAM" id="SSF81321">
    <property type="entry name" value="Family A G protein-coupled receptor-like"/>
    <property type="match status" value="1"/>
</dbReference>
<dbReference type="SUPFAM" id="SSF52058">
    <property type="entry name" value="L domain-like"/>
    <property type="match status" value="1"/>
</dbReference>
<dbReference type="PROSITE" id="PS00237">
    <property type="entry name" value="G_PROTEIN_RECEP_F1_1"/>
    <property type="match status" value="1"/>
</dbReference>
<dbReference type="PROSITE" id="PS50262">
    <property type="entry name" value="G_PROTEIN_RECEP_F1_2"/>
    <property type="match status" value="1"/>
</dbReference>
<feature type="signal peptide" evidence="3">
    <location>
        <begin position="1"/>
        <end position="21"/>
    </location>
</feature>
<feature type="chain" id="PRO_0000012789" description="Thyrotropin receptor">
    <location>
        <begin position="22"/>
        <end position="764"/>
    </location>
</feature>
<feature type="topological domain" description="Extracellular" evidence="3">
    <location>
        <begin position="22"/>
        <end position="413"/>
    </location>
</feature>
<feature type="transmembrane region" description="Helical; Name=1" evidence="3">
    <location>
        <begin position="414"/>
        <end position="441"/>
    </location>
</feature>
<feature type="topological domain" description="Cytoplasmic" evidence="3">
    <location>
        <begin position="442"/>
        <end position="450"/>
    </location>
</feature>
<feature type="transmembrane region" description="Helical; Name=2" evidence="3">
    <location>
        <begin position="451"/>
        <end position="473"/>
    </location>
</feature>
<feature type="topological domain" description="Extracellular" evidence="3">
    <location>
        <begin position="474"/>
        <end position="494"/>
    </location>
</feature>
<feature type="transmembrane region" description="Helical; Name=3" evidence="3">
    <location>
        <begin position="495"/>
        <end position="517"/>
    </location>
</feature>
<feature type="topological domain" description="Cytoplasmic" evidence="3">
    <location>
        <begin position="518"/>
        <end position="537"/>
    </location>
</feature>
<feature type="transmembrane region" description="Helical; Name=4" evidence="3">
    <location>
        <begin position="538"/>
        <end position="560"/>
    </location>
</feature>
<feature type="topological domain" description="Extracellular" evidence="3">
    <location>
        <begin position="561"/>
        <end position="580"/>
    </location>
</feature>
<feature type="transmembrane region" description="Helical; Name=5" evidence="3">
    <location>
        <begin position="581"/>
        <end position="602"/>
    </location>
</feature>
<feature type="topological domain" description="Cytoplasmic" evidence="3">
    <location>
        <begin position="603"/>
        <end position="625"/>
    </location>
</feature>
<feature type="transmembrane region" description="Helical; Name=6" evidence="3">
    <location>
        <begin position="626"/>
        <end position="649"/>
    </location>
</feature>
<feature type="topological domain" description="Extracellular" evidence="3">
    <location>
        <begin position="650"/>
        <end position="660"/>
    </location>
</feature>
<feature type="transmembrane region" description="Helical; Name=7" evidence="3">
    <location>
        <begin position="661"/>
        <end position="682"/>
    </location>
</feature>
<feature type="topological domain" description="Cytoplasmic" evidence="3">
    <location>
        <begin position="683"/>
        <end position="764"/>
    </location>
</feature>
<feature type="repeat" description="LRR 1">
    <location>
        <begin position="51"/>
        <end position="74"/>
    </location>
</feature>
<feature type="repeat" description="LRR 2">
    <location>
        <begin position="125"/>
        <end position="150"/>
    </location>
</feature>
<feature type="repeat" description="LRR 3">
    <location>
        <begin position="152"/>
        <end position="174"/>
    </location>
</feature>
<feature type="repeat" description="LRR 4">
    <location>
        <begin position="176"/>
        <end position="199"/>
    </location>
</feature>
<feature type="repeat" description="LRR 5">
    <location>
        <begin position="201"/>
        <end position="223"/>
    </location>
</feature>
<feature type="repeat" description="LRR 6">
    <location>
        <begin position="225"/>
        <end position="248"/>
    </location>
</feature>
<feature type="short sequence motif" description="PDZ-binding">
    <location>
        <begin position="762"/>
        <end position="764"/>
    </location>
</feature>
<feature type="modified residue" description="Sulfotyrosine" evidence="1">
    <location>
        <position position="385"/>
    </location>
</feature>
<feature type="glycosylation site" description="N-linked (GlcNAc...) asparagine" evidence="3">
    <location>
        <position position="77"/>
    </location>
</feature>
<feature type="glycosylation site" description="N-linked (GlcNAc...) asparagine" evidence="3">
    <location>
        <position position="99"/>
    </location>
</feature>
<feature type="glycosylation site" description="N-linked (GlcNAc...) asparagine" evidence="3">
    <location>
        <position position="177"/>
    </location>
</feature>
<feature type="glycosylation site" description="N-linked (GlcNAc...) asparagine" evidence="3">
    <location>
        <position position="198"/>
    </location>
</feature>
<feature type="glycosylation site" description="N-linked (GlcNAc...) asparagine" evidence="3">
    <location>
        <position position="302"/>
    </location>
</feature>
<feature type="disulfide bond" evidence="4">
    <location>
        <begin position="31"/>
        <end position="41"/>
    </location>
</feature>
<feature type="disulfide bond" evidence="4">
    <location>
        <begin position="494"/>
        <end position="569"/>
    </location>
</feature>
<gene>
    <name type="primary">TSHR</name>
</gene>